<dbReference type="EC" id="3.4.11.1"/>
<dbReference type="EC" id="3.4.11.10"/>
<dbReference type="EMBL" id="AE014299">
    <property type="protein sequence ID" value="AAN54433.1"/>
    <property type="molecule type" value="Genomic_DNA"/>
</dbReference>
<dbReference type="RefSeq" id="NP_716988.1">
    <property type="nucleotide sequence ID" value="NC_004347.2"/>
</dbReference>
<dbReference type="RefSeq" id="WP_011071577.1">
    <property type="nucleotide sequence ID" value="NC_004347.2"/>
</dbReference>
<dbReference type="SMR" id="Q8EH62"/>
<dbReference type="STRING" id="211586.SO_1368"/>
<dbReference type="MEROPS" id="M17.003"/>
<dbReference type="PaxDb" id="211586-SO_1368"/>
<dbReference type="KEGG" id="son:SO_1368"/>
<dbReference type="PATRIC" id="fig|211586.12.peg.1317"/>
<dbReference type="eggNOG" id="COG0260">
    <property type="taxonomic scope" value="Bacteria"/>
</dbReference>
<dbReference type="HOGENOM" id="CLU_013734_2_2_6"/>
<dbReference type="OrthoDB" id="9809354at2"/>
<dbReference type="PhylomeDB" id="Q8EH62"/>
<dbReference type="BioCyc" id="SONE211586:G1GMP-1266-MONOMER"/>
<dbReference type="Proteomes" id="UP000008186">
    <property type="component" value="Chromosome"/>
</dbReference>
<dbReference type="GO" id="GO:0005737">
    <property type="term" value="C:cytoplasm"/>
    <property type="evidence" value="ECO:0000318"/>
    <property type="project" value="GO_Central"/>
</dbReference>
<dbReference type="GO" id="GO:0004177">
    <property type="term" value="F:aminopeptidase activity"/>
    <property type="evidence" value="ECO:0000318"/>
    <property type="project" value="GO_Central"/>
</dbReference>
<dbReference type="GO" id="GO:0030145">
    <property type="term" value="F:manganese ion binding"/>
    <property type="evidence" value="ECO:0007669"/>
    <property type="project" value="UniProtKB-UniRule"/>
</dbReference>
<dbReference type="GO" id="GO:0070006">
    <property type="term" value="F:metalloaminopeptidase activity"/>
    <property type="evidence" value="ECO:0007669"/>
    <property type="project" value="InterPro"/>
</dbReference>
<dbReference type="GO" id="GO:0006508">
    <property type="term" value="P:proteolysis"/>
    <property type="evidence" value="ECO:0000318"/>
    <property type="project" value="GO_Central"/>
</dbReference>
<dbReference type="CDD" id="cd00433">
    <property type="entry name" value="Peptidase_M17"/>
    <property type="match status" value="1"/>
</dbReference>
<dbReference type="FunFam" id="3.40.220.10:FF:000001">
    <property type="entry name" value="Probable cytosol aminopeptidase"/>
    <property type="match status" value="1"/>
</dbReference>
<dbReference type="FunFam" id="3.40.630.10:FF:000004">
    <property type="entry name" value="Probable cytosol aminopeptidase"/>
    <property type="match status" value="1"/>
</dbReference>
<dbReference type="Gene3D" id="3.40.220.10">
    <property type="entry name" value="Leucine Aminopeptidase, subunit E, domain 1"/>
    <property type="match status" value="1"/>
</dbReference>
<dbReference type="Gene3D" id="3.40.630.10">
    <property type="entry name" value="Zn peptidases"/>
    <property type="match status" value="1"/>
</dbReference>
<dbReference type="HAMAP" id="MF_00181">
    <property type="entry name" value="Cytosol_peptidase_M17"/>
    <property type="match status" value="1"/>
</dbReference>
<dbReference type="InterPro" id="IPR011356">
    <property type="entry name" value="Leucine_aapep/pepB"/>
</dbReference>
<dbReference type="InterPro" id="IPR043472">
    <property type="entry name" value="Macro_dom-like"/>
</dbReference>
<dbReference type="InterPro" id="IPR000819">
    <property type="entry name" value="Peptidase_M17_C"/>
</dbReference>
<dbReference type="InterPro" id="IPR023042">
    <property type="entry name" value="Peptidase_M17_leu_NH2_pept"/>
</dbReference>
<dbReference type="InterPro" id="IPR008283">
    <property type="entry name" value="Peptidase_M17_N"/>
</dbReference>
<dbReference type="NCBIfam" id="NF002072">
    <property type="entry name" value="PRK00913.1-1"/>
    <property type="match status" value="1"/>
</dbReference>
<dbReference type="NCBIfam" id="NF002074">
    <property type="entry name" value="PRK00913.1-4"/>
    <property type="match status" value="1"/>
</dbReference>
<dbReference type="PANTHER" id="PTHR11963:SF23">
    <property type="entry name" value="CYTOSOL AMINOPEPTIDASE"/>
    <property type="match status" value="1"/>
</dbReference>
<dbReference type="PANTHER" id="PTHR11963">
    <property type="entry name" value="LEUCINE AMINOPEPTIDASE-RELATED"/>
    <property type="match status" value="1"/>
</dbReference>
<dbReference type="Pfam" id="PF00883">
    <property type="entry name" value="Peptidase_M17"/>
    <property type="match status" value="1"/>
</dbReference>
<dbReference type="Pfam" id="PF02789">
    <property type="entry name" value="Peptidase_M17_N"/>
    <property type="match status" value="1"/>
</dbReference>
<dbReference type="PRINTS" id="PR00481">
    <property type="entry name" value="LAMNOPPTDASE"/>
</dbReference>
<dbReference type="SUPFAM" id="SSF52949">
    <property type="entry name" value="Macro domain-like"/>
    <property type="match status" value="1"/>
</dbReference>
<dbReference type="SUPFAM" id="SSF53187">
    <property type="entry name" value="Zn-dependent exopeptidases"/>
    <property type="match status" value="1"/>
</dbReference>
<dbReference type="PROSITE" id="PS00631">
    <property type="entry name" value="CYTOSOL_AP"/>
    <property type="match status" value="1"/>
</dbReference>
<gene>
    <name type="primary">pepA2</name>
    <name type="synonym">pepA-2</name>
    <name type="ordered locus">SO_1368</name>
</gene>
<reference key="1">
    <citation type="journal article" date="2002" name="Nat. Biotechnol.">
        <title>Genome sequence of the dissimilatory metal ion-reducing bacterium Shewanella oneidensis.</title>
        <authorList>
            <person name="Heidelberg J.F."/>
            <person name="Paulsen I.T."/>
            <person name="Nelson K.E."/>
            <person name="Gaidos E.J."/>
            <person name="Nelson W.C."/>
            <person name="Read T.D."/>
            <person name="Eisen J.A."/>
            <person name="Seshadri R."/>
            <person name="Ward N.L."/>
            <person name="Methe B.A."/>
            <person name="Clayton R.A."/>
            <person name="Meyer T."/>
            <person name="Tsapin A."/>
            <person name="Scott J."/>
            <person name="Beanan M.J."/>
            <person name="Brinkac L.M."/>
            <person name="Daugherty S.C."/>
            <person name="DeBoy R.T."/>
            <person name="Dodson R.J."/>
            <person name="Durkin A.S."/>
            <person name="Haft D.H."/>
            <person name="Kolonay J.F."/>
            <person name="Madupu R."/>
            <person name="Peterson J.D."/>
            <person name="Umayam L.A."/>
            <person name="White O."/>
            <person name="Wolf A.M."/>
            <person name="Vamathevan J.J."/>
            <person name="Weidman J.F."/>
            <person name="Impraim M."/>
            <person name="Lee K."/>
            <person name="Berry K.J."/>
            <person name="Lee C."/>
            <person name="Mueller J."/>
            <person name="Khouri H.M."/>
            <person name="Gill J."/>
            <person name="Utterback T.R."/>
            <person name="McDonald L.A."/>
            <person name="Feldblyum T.V."/>
            <person name="Smith H.O."/>
            <person name="Venter J.C."/>
            <person name="Nealson K.H."/>
            <person name="Fraser C.M."/>
        </authorList>
    </citation>
    <scope>NUCLEOTIDE SEQUENCE [LARGE SCALE GENOMIC DNA]</scope>
    <source>
        <strain>ATCC 700550 / JCM 31522 / CIP 106686 / LMG 19005 / NCIMB 14063 / MR-1</strain>
    </source>
</reference>
<comment type="function">
    <text evidence="1">Presumably involved in the processing and regular turnover of intracellular proteins. Catalyzes the removal of unsubstituted N-terminal amino acids from various peptides (By similarity).</text>
</comment>
<comment type="catalytic activity">
    <reaction>
        <text>Release of an N-terminal amino acid, Xaa-|-Yaa-, in which Xaa is preferably Leu, but may be other amino acids including Pro although not Arg or Lys, and Yaa may be Pro. Amino acid amides and methyl esters are also readily hydrolyzed, but rates on arylamides are exceedingly low.</text>
        <dbReference type="EC" id="3.4.11.1"/>
    </reaction>
</comment>
<comment type="catalytic activity">
    <reaction>
        <text>Release of an N-terminal amino acid, preferentially leucine, but not glutamic or aspartic acids.</text>
        <dbReference type="EC" id="3.4.11.10"/>
    </reaction>
</comment>
<comment type="cofactor">
    <cofactor evidence="1">
        <name>Mn(2+)</name>
        <dbReference type="ChEBI" id="CHEBI:29035"/>
    </cofactor>
    <text evidence="1">Binds 2 manganese ions per subunit.</text>
</comment>
<comment type="subcellular location">
    <subcellularLocation>
        <location evidence="1">Cytoplasm</location>
    </subcellularLocation>
</comment>
<comment type="similarity">
    <text evidence="3">Belongs to the peptidase M17 family.</text>
</comment>
<organism>
    <name type="scientific">Shewanella oneidensis (strain ATCC 700550 / JCM 31522 / CIP 106686 / LMG 19005 / NCIMB 14063 / MR-1)</name>
    <dbReference type="NCBI Taxonomy" id="211586"/>
    <lineage>
        <taxon>Bacteria</taxon>
        <taxon>Pseudomonadati</taxon>
        <taxon>Pseudomonadota</taxon>
        <taxon>Gammaproteobacteria</taxon>
        <taxon>Alteromonadales</taxon>
        <taxon>Shewanellaceae</taxon>
        <taxon>Shewanella</taxon>
    </lineage>
</organism>
<name>AMPA2_SHEON</name>
<protein>
    <recommendedName>
        <fullName>Probable cytosol aminopeptidase 2</fullName>
        <ecNumber>3.4.11.1</ecNumber>
    </recommendedName>
    <alternativeName>
        <fullName>Leucine aminopeptidase 2</fullName>
        <shortName>LAP 2</shortName>
        <ecNumber>3.4.11.10</ecNumber>
    </alternativeName>
    <alternativeName>
        <fullName>Leucyl aminopeptidase 2</fullName>
    </alternativeName>
</protein>
<sequence length="502" mass="54723">MEFSVKSGSPEKQRSACIVVGVYEPRRLSGIAEQLDKISEGYISNLLRRGDLEGKPGQMLLLHHVPNVLSERVLLVGCGKERELDERQYKQIITKTINTLNETGSMEAVCFLTELHVKGRDTYWKVRQAVETTNSSLYCFDALKTRKGETRRPLRKLVFNVPTRRELTLGERAIEHGMAVSSGMHLCRDVANMPPNICNPAYLASQARQLAEIHENLHVSTVGEEQMAKLGMNSYLAVGRASANESIMTVMEYKGAVDSTEKPIVLIGKGLTFDSGGISLKPGEAMDEMKYDMGGAAGVIGTMKAICEMKLPINVVGILAGCENMPSGNAYRPGDILTTLSGQTVEVLNTDAEGRLVLCDVLTYVERFDPELVIDTATLTGACVIALGKHASGLFSSHNPLAHELLNAGEQSGDRAWRMPLWDEYQDMLDSPFADMTNLGGRPAGAITAACFLSRFAKKYNWAHLDVAGTAWNSGANKGSTGRPVPILTQFLINRAGVELGE</sequence>
<keyword id="KW-0031">Aminopeptidase</keyword>
<keyword id="KW-0963">Cytoplasm</keyword>
<keyword id="KW-0378">Hydrolase</keyword>
<keyword id="KW-0464">Manganese</keyword>
<keyword id="KW-0479">Metal-binding</keyword>
<keyword id="KW-0645">Protease</keyword>
<keyword id="KW-1185">Reference proteome</keyword>
<evidence type="ECO:0000250" key="1"/>
<evidence type="ECO:0000255" key="2"/>
<evidence type="ECO:0000305" key="3"/>
<feature type="chain" id="PRO_0000165797" description="Probable cytosol aminopeptidase 2">
    <location>
        <begin position="1"/>
        <end position="502"/>
    </location>
</feature>
<feature type="active site" evidence="2">
    <location>
        <position position="281"/>
    </location>
</feature>
<feature type="active site" evidence="2">
    <location>
        <position position="355"/>
    </location>
</feature>
<feature type="binding site" evidence="1">
    <location>
        <position position="269"/>
    </location>
    <ligand>
        <name>Mn(2+)</name>
        <dbReference type="ChEBI" id="CHEBI:29035"/>
        <label>2</label>
    </ligand>
</feature>
<feature type="binding site" evidence="1">
    <location>
        <position position="274"/>
    </location>
    <ligand>
        <name>Mn(2+)</name>
        <dbReference type="ChEBI" id="CHEBI:29035"/>
        <label>1</label>
    </ligand>
</feature>
<feature type="binding site" evidence="1">
    <location>
        <position position="274"/>
    </location>
    <ligand>
        <name>Mn(2+)</name>
        <dbReference type="ChEBI" id="CHEBI:29035"/>
        <label>2</label>
    </ligand>
</feature>
<feature type="binding site" evidence="1">
    <location>
        <position position="292"/>
    </location>
    <ligand>
        <name>Mn(2+)</name>
        <dbReference type="ChEBI" id="CHEBI:29035"/>
        <label>2</label>
    </ligand>
</feature>
<feature type="binding site" evidence="1">
    <location>
        <position position="351"/>
    </location>
    <ligand>
        <name>Mn(2+)</name>
        <dbReference type="ChEBI" id="CHEBI:29035"/>
        <label>1</label>
    </ligand>
</feature>
<feature type="binding site" evidence="1">
    <location>
        <position position="353"/>
    </location>
    <ligand>
        <name>Mn(2+)</name>
        <dbReference type="ChEBI" id="CHEBI:29035"/>
        <label>1</label>
    </ligand>
</feature>
<feature type="binding site" evidence="1">
    <location>
        <position position="353"/>
    </location>
    <ligand>
        <name>Mn(2+)</name>
        <dbReference type="ChEBI" id="CHEBI:29035"/>
        <label>2</label>
    </ligand>
</feature>
<accession>Q8EH62</accession>
<proteinExistence type="inferred from homology"/>